<dbReference type="EMBL" id="AF361220">
    <property type="protein sequence ID" value="AAL99633.1"/>
    <property type="molecule type" value="mRNA"/>
</dbReference>
<dbReference type="EMBL" id="AF361221">
    <property type="protein sequence ID" value="AAL99634.1"/>
    <property type="status" value="ALT_TERM"/>
    <property type="molecule type" value="mRNA"/>
</dbReference>
<dbReference type="EMBL" id="AL031680">
    <property type="status" value="NOT_ANNOTATED_CDS"/>
    <property type="molecule type" value="Genomic_DNA"/>
</dbReference>
<dbReference type="EMBL" id="AL133228">
    <property type="status" value="NOT_ANNOTATED_CDS"/>
    <property type="molecule type" value="Genomic_DNA"/>
</dbReference>
<dbReference type="EMBL" id="AK000502">
    <property type="protein sequence ID" value="BAA91209.1"/>
    <property type="status" value="ALT_INIT"/>
    <property type="molecule type" value="mRNA"/>
</dbReference>
<dbReference type="EMBL" id="BC038381">
    <property type="protein sequence ID" value="AAH38381.1"/>
    <property type="status" value="ALT_INIT"/>
    <property type="molecule type" value="mRNA"/>
</dbReference>
<dbReference type="EMBL" id="BC047337">
    <property type="protein sequence ID" value="AAH47337.1"/>
    <property type="molecule type" value="mRNA"/>
</dbReference>
<dbReference type="EMBL" id="AJ511266">
    <property type="protein sequence ID" value="CAD53579.1"/>
    <property type="status" value="ALT_INIT"/>
    <property type="molecule type" value="mRNA"/>
</dbReference>
<dbReference type="CCDS" id="CCDS33487.1">
    <molecule id="Q8TDM0-1"/>
</dbReference>
<dbReference type="RefSeq" id="NP_001010974.1">
    <property type="nucleotide sequence ID" value="NM_001010974.2"/>
</dbReference>
<dbReference type="RefSeq" id="NP_060313.3">
    <molecule id="Q8TDM0-1"/>
    <property type="nucleotide sequence ID" value="NM_017843.4"/>
</dbReference>
<dbReference type="RefSeq" id="NP_942094.2">
    <property type="nucleotide sequence ID" value="NM_198799.3"/>
</dbReference>
<dbReference type="RefSeq" id="XP_011527189.1">
    <molecule id="Q8TDM0-3"/>
    <property type="nucleotide sequence ID" value="XM_011528887.3"/>
</dbReference>
<dbReference type="RefSeq" id="XP_054179637.1">
    <molecule id="Q8TDM0-3"/>
    <property type="nucleotide sequence ID" value="XM_054323662.1"/>
</dbReference>
<dbReference type="SMR" id="Q8TDM0"/>
<dbReference type="BioGRID" id="120785">
    <property type="interactions" value="17"/>
</dbReference>
<dbReference type="FunCoup" id="Q8TDM0">
    <property type="interactions" value="63"/>
</dbReference>
<dbReference type="IntAct" id="Q8TDM0">
    <property type="interactions" value="15"/>
</dbReference>
<dbReference type="STRING" id="9606.ENSP00000351642"/>
<dbReference type="GlyGen" id="Q8TDM0">
    <property type="glycosylation" value="1 site, 1 O-linked glycan (1 site)"/>
</dbReference>
<dbReference type="iPTMnet" id="Q8TDM0"/>
<dbReference type="PhosphoSitePlus" id="Q8TDM0"/>
<dbReference type="BioMuta" id="BCAS4"/>
<dbReference type="DMDM" id="33301030"/>
<dbReference type="jPOST" id="Q8TDM0"/>
<dbReference type="MassIVE" id="Q8TDM0"/>
<dbReference type="PaxDb" id="9606-ENSP00000351642"/>
<dbReference type="PeptideAtlas" id="Q8TDM0"/>
<dbReference type="ProteomicsDB" id="74298">
    <molecule id="Q8TDM0-1"/>
</dbReference>
<dbReference type="ProteomicsDB" id="74299">
    <molecule id="Q8TDM0-2"/>
</dbReference>
<dbReference type="ProteomicsDB" id="74300">
    <molecule id="Q8TDM0-3"/>
</dbReference>
<dbReference type="Pumba" id="Q8TDM0"/>
<dbReference type="Antibodypedia" id="44045">
    <property type="antibodies" value="121 antibodies from 27 providers"/>
</dbReference>
<dbReference type="DNASU" id="55653"/>
<dbReference type="Ensembl" id="ENST00000358791.9">
    <molecule id="Q8TDM0-1"/>
    <property type="protein sequence ID" value="ENSP00000351642.5"/>
    <property type="gene ID" value="ENSG00000124243.19"/>
</dbReference>
<dbReference type="GeneID" id="55653"/>
<dbReference type="KEGG" id="hsa:55653"/>
<dbReference type="UCSC" id="uc002xvq.4">
    <molecule id="Q8TDM0-1"/>
    <property type="organism name" value="human"/>
</dbReference>
<dbReference type="AGR" id="HGNC:14367"/>
<dbReference type="CTD" id="55653"/>
<dbReference type="DisGeNET" id="55653"/>
<dbReference type="GeneCards" id="BCAS4"/>
<dbReference type="HGNC" id="HGNC:14367">
    <property type="gene designation" value="BCAS4"/>
</dbReference>
<dbReference type="HPA" id="ENSG00000124243">
    <property type="expression patterns" value="Tissue enhanced (lymphoid)"/>
</dbReference>
<dbReference type="MIM" id="607471">
    <property type="type" value="gene"/>
</dbReference>
<dbReference type="neXtProt" id="NX_Q8TDM0"/>
<dbReference type="OpenTargets" id="ENSG00000124243"/>
<dbReference type="PharmGKB" id="PA25287"/>
<dbReference type="VEuPathDB" id="HostDB:ENSG00000124243"/>
<dbReference type="eggNOG" id="ENOG502SAED">
    <property type="taxonomic scope" value="Eukaryota"/>
</dbReference>
<dbReference type="GeneTree" id="ENSGT00390000006790"/>
<dbReference type="HOGENOM" id="CLU_096507_0_1_1"/>
<dbReference type="InParanoid" id="Q8TDM0"/>
<dbReference type="OMA" id="GNKRWAP"/>
<dbReference type="OrthoDB" id="2372305at2759"/>
<dbReference type="PAN-GO" id="Q8TDM0">
    <property type="GO annotations" value="1 GO annotation based on evolutionary models"/>
</dbReference>
<dbReference type="PhylomeDB" id="Q8TDM0"/>
<dbReference type="TreeFam" id="TF326629"/>
<dbReference type="PathwayCommons" id="Q8TDM0"/>
<dbReference type="SignaLink" id="Q8TDM0"/>
<dbReference type="BioGRID-ORCS" id="55653">
    <property type="hits" value="22 hits in 1146 CRISPR screens"/>
</dbReference>
<dbReference type="ChiTaRS" id="BCAS4">
    <property type="organism name" value="human"/>
</dbReference>
<dbReference type="GenomeRNAi" id="55653"/>
<dbReference type="Pharos" id="Q8TDM0">
    <property type="development level" value="Tbio"/>
</dbReference>
<dbReference type="PRO" id="PR:Q8TDM0"/>
<dbReference type="Proteomes" id="UP000005640">
    <property type="component" value="Chromosome 20"/>
</dbReference>
<dbReference type="RNAct" id="Q8TDM0">
    <property type="molecule type" value="protein"/>
</dbReference>
<dbReference type="Bgee" id="ENSG00000124243">
    <property type="expression patterns" value="Expressed in lymph node and 168 other cell types or tissues"/>
</dbReference>
<dbReference type="ExpressionAtlas" id="Q8TDM0">
    <property type="expression patterns" value="baseline and differential"/>
</dbReference>
<dbReference type="GO" id="GO:0031083">
    <property type="term" value="C:BLOC-1 complex"/>
    <property type="evidence" value="ECO:0000318"/>
    <property type="project" value="GO_Central"/>
</dbReference>
<dbReference type="GO" id="GO:0005737">
    <property type="term" value="C:cytoplasm"/>
    <property type="evidence" value="ECO:0007669"/>
    <property type="project" value="UniProtKB-SubCell"/>
</dbReference>
<dbReference type="InterPro" id="IPR024857">
    <property type="entry name" value="Cappuccino"/>
</dbReference>
<dbReference type="PANTHER" id="PTHR16230:SF5">
    <property type="entry name" value="BREAST CARCINOMA-AMPLIFIED SEQUENCE 4"/>
    <property type="match status" value="1"/>
</dbReference>
<dbReference type="PANTHER" id="PTHR16230">
    <property type="entry name" value="CAPPUCCINO"/>
    <property type="match status" value="1"/>
</dbReference>
<accession>Q8TDM0</accession>
<accession>Q5TD52</accession>
<accession>Q5TD53</accession>
<accession>Q5TD54</accession>
<accession>Q5U5K7</accession>
<accession>Q5XKE8</accession>
<accession>Q8IXI7</accession>
<accession>Q8NEZ6</accession>
<accession>Q8TDL9</accession>
<accession>Q9NX13</accession>
<accession>Q9Y511</accession>
<organism>
    <name type="scientific">Homo sapiens</name>
    <name type="common">Human</name>
    <dbReference type="NCBI Taxonomy" id="9606"/>
    <lineage>
        <taxon>Eukaryota</taxon>
        <taxon>Metazoa</taxon>
        <taxon>Chordata</taxon>
        <taxon>Craniata</taxon>
        <taxon>Vertebrata</taxon>
        <taxon>Euteleostomi</taxon>
        <taxon>Mammalia</taxon>
        <taxon>Eutheria</taxon>
        <taxon>Euarchontoglires</taxon>
        <taxon>Primates</taxon>
        <taxon>Haplorrhini</taxon>
        <taxon>Catarrhini</taxon>
        <taxon>Hominidae</taxon>
        <taxon>Homo</taxon>
    </lineage>
</organism>
<sequence length="211" mass="22758">MQRTGGGAPRPGRNHGLPGSLRQPDPVALLMLLVDADQPEPMRSGARELALFLTPEPGAEAKEVEETIEGMLLRLEEFCSLADLIRSDTSQILEENIPVLKAKLTEMRGIYAKVDRLEAFVKMVGHHVAFLEADVLQAERDHGAFPQALRRWLGSAGLPSFRNVECSGTIPARCNLRLPGSSDSPASASQVAGITEVTCTGARDVRAAHTV</sequence>
<reference key="1">
    <citation type="journal article" date="2002" name="Genes Chromosomes Cancer">
        <title>Cloning of BCAS3 (17q23) and BCAS4 (20q13) genes that undergo amplification, overexpression, and fusion in breast cancer.</title>
        <authorList>
            <person name="Baerlund M."/>
            <person name="Monni O."/>
            <person name="Weaver J.D."/>
            <person name="Kauraniemi P."/>
            <person name="Sauter G."/>
            <person name="Heiskanen M."/>
            <person name="Kallioniemi O.-P."/>
            <person name="Kallioniemi A."/>
        </authorList>
    </citation>
    <scope>NUCLEOTIDE SEQUENCE [MRNA] (ISOFORM 1)</scope>
    <scope>TISSUE SPECIFICITY</scope>
    <scope>CHROMOSOMAL TRANSLOCATION WITH BCAS3</scope>
    <source>
        <tissue>Liver</tissue>
    </source>
</reference>
<reference key="2">
    <citation type="journal article" date="2001" name="Nature">
        <title>The DNA sequence and comparative analysis of human chromosome 20.</title>
        <authorList>
            <person name="Deloukas P."/>
            <person name="Matthews L.H."/>
            <person name="Ashurst J.L."/>
            <person name="Burton J."/>
            <person name="Gilbert J.G.R."/>
            <person name="Jones M."/>
            <person name="Stavrides G."/>
            <person name="Almeida J.P."/>
            <person name="Babbage A.K."/>
            <person name="Bagguley C.L."/>
            <person name="Bailey J."/>
            <person name="Barlow K.F."/>
            <person name="Bates K.N."/>
            <person name="Beard L.M."/>
            <person name="Beare D.M."/>
            <person name="Beasley O.P."/>
            <person name="Bird C.P."/>
            <person name="Blakey S.E."/>
            <person name="Bridgeman A.M."/>
            <person name="Brown A.J."/>
            <person name="Buck D."/>
            <person name="Burrill W.D."/>
            <person name="Butler A.P."/>
            <person name="Carder C."/>
            <person name="Carter N.P."/>
            <person name="Chapman J.C."/>
            <person name="Clamp M."/>
            <person name="Clark G."/>
            <person name="Clark L.N."/>
            <person name="Clark S.Y."/>
            <person name="Clee C.M."/>
            <person name="Clegg S."/>
            <person name="Cobley V.E."/>
            <person name="Collier R.E."/>
            <person name="Connor R.E."/>
            <person name="Corby N.R."/>
            <person name="Coulson A."/>
            <person name="Coville G.J."/>
            <person name="Deadman R."/>
            <person name="Dhami P.D."/>
            <person name="Dunn M."/>
            <person name="Ellington A.G."/>
            <person name="Frankland J.A."/>
            <person name="Fraser A."/>
            <person name="French L."/>
            <person name="Garner P."/>
            <person name="Grafham D.V."/>
            <person name="Griffiths C."/>
            <person name="Griffiths M.N.D."/>
            <person name="Gwilliam R."/>
            <person name="Hall R.E."/>
            <person name="Hammond S."/>
            <person name="Harley J.L."/>
            <person name="Heath P.D."/>
            <person name="Ho S."/>
            <person name="Holden J.L."/>
            <person name="Howden P.J."/>
            <person name="Huckle E."/>
            <person name="Hunt A.R."/>
            <person name="Hunt S.E."/>
            <person name="Jekosch K."/>
            <person name="Johnson C.M."/>
            <person name="Johnson D."/>
            <person name="Kay M.P."/>
            <person name="Kimberley A.M."/>
            <person name="King A."/>
            <person name="Knights A."/>
            <person name="Laird G.K."/>
            <person name="Lawlor S."/>
            <person name="Lehvaeslaiho M.H."/>
            <person name="Leversha M.A."/>
            <person name="Lloyd C."/>
            <person name="Lloyd D.M."/>
            <person name="Lovell J.D."/>
            <person name="Marsh V.L."/>
            <person name="Martin S.L."/>
            <person name="McConnachie L.J."/>
            <person name="McLay K."/>
            <person name="McMurray A.A."/>
            <person name="Milne S.A."/>
            <person name="Mistry D."/>
            <person name="Moore M.J.F."/>
            <person name="Mullikin J.C."/>
            <person name="Nickerson T."/>
            <person name="Oliver K."/>
            <person name="Parker A."/>
            <person name="Patel R."/>
            <person name="Pearce T.A.V."/>
            <person name="Peck A.I."/>
            <person name="Phillimore B.J.C.T."/>
            <person name="Prathalingam S.R."/>
            <person name="Plumb R.W."/>
            <person name="Ramsay H."/>
            <person name="Rice C.M."/>
            <person name="Ross M.T."/>
            <person name="Scott C.E."/>
            <person name="Sehra H.K."/>
            <person name="Shownkeen R."/>
            <person name="Sims S."/>
            <person name="Skuce C.D."/>
            <person name="Smith M.L."/>
            <person name="Soderlund C."/>
            <person name="Steward C.A."/>
            <person name="Sulston J.E."/>
            <person name="Swann R.M."/>
            <person name="Sycamore N."/>
            <person name="Taylor R."/>
            <person name="Tee L."/>
            <person name="Thomas D.W."/>
            <person name="Thorpe A."/>
            <person name="Tracey A."/>
            <person name="Tromans A.C."/>
            <person name="Vaudin M."/>
            <person name="Wall M."/>
            <person name="Wallis J.M."/>
            <person name="Whitehead S.L."/>
            <person name="Whittaker P."/>
            <person name="Willey D.L."/>
            <person name="Williams L."/>
            <person name="Williams S.A."/>
            <person name="Wilming L."/>
            <person name="Wray P.W."/>
            <person name="Hubbard T."/>
            <person name="Durbin R.M."/>
            <person name="Bentley D.R."/>
            <person name="Beck S."/>
            <person name="Rogers J."/>
        </authorList>
    </citation>
    <scope>NUCLEOTIDE SEQUENCE [LARGE SCALE GENOMIC DNA]</scope>
</reference>
<reference key="3">
    <citation type="journal article" date="2004" name="Nat. Genet.">
        <title>Complete sequencing and characterization of 21,243 full-length human cDNAs.</title>
        <authorList>
            <person name="Ota T."/>
            <person name="Suzuki Y."/>
            <person name="Nishikawa T."/>
            <person name="Otsuki T."/>
            <person name="Sugiyama T."/>
            <person name="Irie R."/>
            <person name="Wakamatsu A."/>
            <person name="Hayashi K."/>
            <person name="Sato H."/>
            <person name="Nagai K."/>
            <person name="Kimura K."/>
            <person name="Makita H."/>
            <person name="Sekine M."/>
            <person name="Obayashi M."/>
            <person name="Nishi T."/>
            <person name="Shibahara T."/>
            <person name="Tanaka T."/>
            <person name="Ishii S."/>
            <person name="Yamamoto J."/>
            <person name="Saito K."/>
            <person name="Kawai Y."/>
            <person name="Isono Y."/>
            <person name="Nakamura Y."/>
            <person name="Nagahari K."/>
            <person name="Murakami K."/>
            <person name="Yasuda T."/>
            <person name="Iwayanagi T."/>
            <person name="Wagatsuma M."/>
            <person name="Shiratori A."/>
            <person name="Sudo H."/>
            <person name="Hosoiri T."/>
            <person name="Kaku Y."/>
            <person name="Kodaira H."/>
            <person name="Kondo H."/>
            <person name="Sugawara M."/>
            <person name="Takahashi M."/>
            <person name="Kanda K."/>
            <person name="Yokoi T."/>
            <person name="Furuya T."/>
            <person name="Kikkawa E."/>
            <person name="Omura Y."/>
            <person name="Abe K."/>
            <person name="Kamihara K."/>
            <person name="Katsuta N."/>
            <person name="Sato K."/>
            <person name="Tanikawa M."/>
            <person name="Yamazaki M."/>
            <person name="Ninomiya K."/>
            <person name="Ishibashi T."/>
            <person name="Yamashita H."/>
            <person name="Murakawa K."/>
            <person name="Fujimori K."/>
            <person name="Tanai H."/>
            <person name="Kimata M."/>
            <person name="Watanabe M."/>
            <person name="Hiraoka S."/>
            <person name="Chiba Y."/>
            <person name="Ishida S."/>
            <person name="Ono Y."/>
            <person name="Takiguchi S."/>
            <person name="Watanabe S."/>
            <person name="Yosida M."/>
            <person name="Hotuta T."/>
            <person name="Kusano J."/>
            <person name="Kanehori K."/>
            <person name="Takahashi-Fujii A."/>
            <person name="Hara H."/>
            <person name="Tanase T.-O."/>
            <person name="Nomura Y."/>
            <person name="Togiya S."/>
            <person name="Komai F."/>
            <person name="Hara R."/>
            <person name="Takeuchi K."/>
            <person name="Arita M."/>
            <person name="Imose N."/>
            <person name="Musashino K."/>
            <person name="Yuuki H."/>
            <person name="Oshima A."/>
            <person name="Sasaki N."/>
            <person name="Aotsuka S."/>
            <person name="Yoshikawa Y."/>
            <person name="Matsunawa H."/>
            <person name="Ichihara T."/>
            <person name="Shiohata N."/>
            <person name="Sano S."/>
            <person name="Moriya S."/>
            <person name="Momiyama H."/>
            <person name="Satoh N."/>
            <person name="Takami S."/>
            <person name="Terashima Y."/>
            <person name="Suzuki O."/>
            <person name="Nakagawa S."/>
            <person name="Senoh A."/>
            <person name="Mizoguchi H."/>
            <person name="Goto Y."/>
            <person name="Shimizu F."/>
            <person name="Wakebe H."/>
            <person name="Hishigaki H."/>
            <person name="Watanabe T."/>
            <person name="Sugiyama A."/>
            <person name="Takemoto M."/>
            <person name="Kawakami B."/>
            <person name="Yamazaki M."/>
            <person name="Watanabe K."/>
            <person name="Kumagai A."/>
            <person name="Itakura S."/>
            <person name="Fukuzumi Y."/>
            <person name="Fujimori Y."/>
            <person name="Komiyama M."/>
            <person name="Tashiro H."/>
            <person name="Tanigami A."/>
            <person name="Fujiwara T."/>
            <person name="Ono T."/>
            <person name="Yamada K."/>
            <person name="Fujii Y."/>
            <person name="Ozaki K."/>
            <person name="Hirao M."/>
            <person name="Ohmori Y."/>
            <person name="Kawabata A."/>
            <person name="Hikiji T."/>
            <person name="Kobatake N."/>
            <person name="Inagaki H."/>
            <person name="Ikema Y."/>
            <person name="Okamoto S."/>
            <person name="Okitani R."/>
            <person name="Kawakami T."/>
            <person name="Noguchi S."/>
            <person name="Itoh T."/>
            <person name="Shigeta K."/>
            <person name="Senba T."/>
            <person name="Matsumura K."/>
            <person name="Nakajima Y."/>
            <person name="Mizuno T."/>
            <person name="Morinaga M."/>
            <person name="Sasaki M."/>
            <person name="Togashi T."/>
            <person name="Oyama M."/>
            <person name="Hata H."/>
            <person name="Watanabe M."/>
            <person name="Komatsu T."/>
            <person name="Mizushima-Sugano J."/>
            <person name="Satoh T."/>
            <person name="Shirai Y."/>
            <person name="Takahashi Y."/>
            <person name="Nakagawa K."/>
            <person name="Okumura K."/>
            <person name="Nagase T."/>
            <person name="Nomura N."/>
            <person name="Kikuchi H."/>
            <person name="Masuho Y."/>
            <person name="Yamashita R."/>
            <person name="Nakai K."/>
            <person name="Yada T."/>
            <person name="Nakamura Y."/>
            <person name="Ohara O."/>
            <person name="Isogai T."/>
            <person name="Sugano S."/>
        </authorList>
    </citation>
    <scope>NUCLEOTIDE SEQUENCE [LARGE SCALE MRNA] OF 14-211 (ISOFORM 1)</scope>
</reference>
<reference key="4">
    <citation type="journal article" date="2004" name="Genome Res.">
        <title>The status, quality, and expansion of the NIH full-length cDNA project: the Mammalian Gene Collection (MGC).</title>
        <authorList>
            <consortium name="The MGC Project Team"/>
        </authorList>
    </citation>
    <scope>NUCLEOTIDE SEQUENCE [LARGE SCALE MRNA] OF 25-211 (ISOFORM 1)</scope>
    <scope>NUCLEOTIDE SEQUENCE [LARGE SCALE MRNA] OF 18-211 (ISOFORM 3)</scope>
    <source>
        <tissue>Lymph</tissue>
    </source>
</reference>
<reference key="5">
    <citation type="submission" date="2002-10" db="EMBL/GenBank/DDBJ databases">
        <title>Cloning and sequencing of a new BCAS4 isoform (BCAS4 isoform 1).</title>
        <authorList>
            <person name="Bauer M."/>
        </authorList>
    </citation>
    <scope>NUCLEOTIDE SEQUENCE [MRNA] OF 27-211 (ISOFORM 2)</scope>
</reference>
<reference key="6">
    <citation type="journal article" date="2012" name="Proc. Natl. Acad. Sci. U.S.A.">
        <title>N-terminal acetylome analyses and functional insights of the N-terminal acetyltransferase NatB.</title>
        <authorList>
            <person name="Van Damme P."/>
            <person name="Lasa M."/>
            <person name="Polevoda B."/>
            <person name="Gazquez C."/>
            <person name="Elosegui-Artola A."/>
            <person name="Kim D.S."/>
            <person name="De Juan-Pardo E."/>
            <person name="Demeyer K."/>
            <person name="Hole K."/>
            <person name="Larrea E."/>
            <person name="Timmerman E."/>
            <person name="Prieto J."/>
            <person name="Arnesen T."/>
            <person name="Sherman F."/>
            <person name="Gevaert K."/>
            <person name="Aldabe R."/>
        </authorList>
    </citation>
    <scope>IDENTIFICATION BY MASS SPECTROMETRY [LARGE SCALE ANALYSIS]</scope>
</reference>
<name>BCAS4_HUMAN</name>
<feature type="chain" id="PRO_0000064865" description="Breast carcinoma-amplified sequence 4">
    <location>
        <begin position="1"/>
        <end position="211"/>
    </location>
</feature>
<feature type="region of interest" description="Disordered" evidence="1">
    <location>
        <begin position="1"/>
        <end position="21"/>
    </location>
</feature>
<feature type="site" description="Breakpoint for translocation to form BCAS4-BCAS3">
    <location>
        <begin position="60"/>
        <end position="61"/>
    </location>
</feature>
<feature type="splice variant" id="VSP_007854" description="In isoform 2." evidence="4">
    <original>AFVKMVGHHVAFLEADVLQAERDHGAFPQ</original>
    <variation>KSPAPVPVTYELPTLYRTEDYFPVDAGEA</variation>
    <location>
        <begin position="119"/>
        <end position="147"/>
    </location>
</feature>
<feature type="splice variant" id="VSP_007855" description="In isoform 2." evidence="4">
    <location>
        <begin position="148"/>
        <end position="211"/>
    </location>
</feature>
<feature type="splice variant" id="VSP_015289" description="In isoform 3." evidence="3">
    <original>VECSGTIPARCNLRLPGSSDSPASASQVAGITEVTCTGAR</original>
    <variation>KSPAPVPVTYELPTLYRTEDYFPVDAGEAQHHPRTCPRPL</variation>
    <location>
        <begin position="164"/>
        <end position="203"/>
    </location>
</feature>
<feature type="splice variant" id="VSP_015290" description="In isoform 3." evidence="3">
    <location>
        <begin position="204"/>
        <end position="211"/>
    </location>
</feature>
<feature type="sequence variant" id="VAR_016031" description="In dbSNP:rs2272962.">
    <original>E</original>
    <variation>D</variation>
    <location>
        <position position="56"/>
    </location>
</feature>
<feature type="sequence variant" id="VAR_059590" description="In dbSNP:rs7273412.">
    <original>R</original>
    <variation>H</variation>
    <location>
        <position position="173"/>
    </location>
</feature>
<protein>
    <recommendedName>
        <fullName>Breast carcinoma-amplified sequence 4</fullName>
    </recommendedName>
</protein>
<gene>
    <name type="primary">BCAS4</name>
</gene>
<proteinExistence type="evidence at protein level"/>
<keyword id="KW-0025">Alternative splicing</keyword>
<keyword id="KW-0160">Chromosomal rearrangement</keyword>
<keyword id="KW-0963">Cytoplasm</keyword>
<keyword id="KW-1267">Proteomics identification</keyword>
<keyword id="KW-0656">Proto-oncogene</keyword>
<keyword id="KW-1185">Reference proteome</keyword>
<comment type="interaction">
    <interactant intactId="EBI-13025473">
        <id>Q8TDM0-3</id>
    </interactant>
    <interactant intactId="EBI-744973">
        <id>Q9C005</id>
        <label>DPY30</label>
    </interactant>
    <organismsDiffer>false</organismsDiffer>
    <experiments>3</experiments>
</comment>
<comment type="interaction">
    <interactant intactId="EBI-13025473">
        <id>Q8TDM0-3</id>
    </interactant>
    <interactant intactId="EBI-744099">
        <id>Q9H0I2</id>
        <label>ENKD1</label>
    </interactant>
    <organismsDiffer>false</organismsDiffer>
    <experiments>3</experiments>
</comment>
<comment type="subcellular location">
    <subcellularLocation>
        <location evidence="5">Cytoplasm</location>
    </subcellularLocation>
</comment>
<comment type="alternative products">
    <event type="alternative splicing"/>
    <isoform>
        <id>Q8TDM0-1</id>
        <name>1</name>
        <sequence type="displayed"/>
    </isoform>
    <isoform>
        <id>Q8TDM0-2</id>
        <name>2</name>
        <sequence type="described" ref="VSP_007854 VSP_007855"/>
    </isoform>
    <isoform>
        <id>Q8TDM0-3</id>
        <name>3</name>
        <sequence type="described" ref="VSP_015289 VSP_015290"/>
    </isoform>
</comment>
<comment type="tissue specificity">
    <text evidence="2">Brain, thymus, spleen, kidney and placenta. Overexpressed in most breast cancer cell lines.</text>
</comment>
<comment type="disease">
    <text>A chromosomal aberration involving BCAS4 has been found in some breast carcinoma cell lines. Translocation t(17;20)(q23;q13) with BCAS3.</text>
</comment>
<comment type="similarity">
    <text evidence="5">Belongs to the cappuccino family.</text>
</comment>
<comment type="sequence caution" evidence="5">
    <conflict type="erroneous initiation">
        <sequence resource="EMBL-CDS" id="AAH38381"/>
    </conflict>
</comment>
<comment type="sequence caution" evidence="5">
    <conflict type="erroneous initiation">
        <sequence resource="EMBL-CDS" id="BAA91209"/>
    </conflict>
</comment>
<comment type="sequence caution" evidence="5">
    <conflict type="erroneous initiation">
        <sequence resource="EMBL-CDS" id="CAD53579"/>
    </conflict>
</comment>
<comment type="online information" name="Atlas of Genetics and Cytogenetics in Oncology and Haematology">
    <link uri="https://atlasgeneticsoncology.org/gene/767/BCAS4"/>
</comment>
<evidence type="ECO:0000256" key="1">
    <source>
        <dbReference type="SAM" id="MobiDB-lite"/>
    </source>
</evidence>
<evidence type="ECO:0000269" key="2">
    <source>
    </source>
</evidence>
<evidence type="ECO:0000303" key="3">
    <source>
    </source>
</evidence>
<evidence type="ECO:0000303" key="4">
    <source ref="5"/>
</evidence>
<evidence type="ECO:0000305" key="5"/>